<organism>
    <name type="scientific">Azorhizobium caulinodans (strain ATCC 43989 / DSM 5975 / JCM 20966 / LMG 6465 / NBRC 14845 / NCIMB 13405 / ORS 571)</name>
    <dbReference type="NCBI Taxonomy" id="438753"/>
    <lineage>
        <taxon>Bacteria</taxon>
        <taxon>Pseudomonadati</taxon>
        <taxon>Pseudomonadota</taxon>
        <taxon>Alphaproteobacteria</taxon>
        <taxon>Hyphomicrobiales</taxon>
        <taxon>Xanthobacteraceae</taxon>
        <taxon>Azorhizobium</taxon>
    </lineage>
</organism>
<proteinExistence type="inferred from homology"/>
<reference key="1">
    <citation type="submission" date="2007-04" db="EMBL/GenBank/DDBJ databases">
        <title>Complete genome sequence of the nitrogen-fixing bacterium Azorhizobium caulinodans ORS571.</title>
        <authorList>
            <person name="Lee K.B."/>
            <person name="Backer P.D."/>
            <person name="Aono T."/>
            <person name="Liu C.T."/>
            <person name="Suzuki S."/>
            <person name="Suzuki T."/>
            <person name="Kaneko T."/>
            <person name="Yamada M."/>
            <person name="Tabata S."/>
            <person name="Kupfer D.M."/>
            <person name="Najar F.Z."/>
            <person name="Wiley G.B."/>
            <person name="Roe B."/>
            <person name="Binnewies T."/>
            <person name="Ussery D."/>
            <person name="Vereecke D."/>
            <person name="Gevers D."/>
            <person name="Holsters M."/>
            <person name="Oyaizu H."/>
        </authorList>
    </citation>
    <scope>NUCLEOTIDE SEQUENCE [LARGE SCALE GENOMIC DNA]</scope>
    <source>
        <strain>ATCC 43989 / DSM 5975 / JCM 20966 / LMG 6465 / NBRC 14845 / NCIMB 13405 / ORS 571</strain>
    </source>
</reference>
<keyword id="KW-0997">Cell inner membrane</keyword>
<keyword id="KW-1003">Cell membrane</keyword>
<keyword id="KW-0350">Heme biosynthesis</keyword>
<keyword id="KW-0472">Membrane</keyword>
<keyword id="KW-1185">Reference proteome</keyword>
<keyword id="KW-0808">Transferase</keyword>
<keyword id="KW-0812">Transmembrane</keyword>
<keyword id="KW-1133">Transmembrane helix</keyword>
<comment type="function">
    <text evidence="1">Converts heme B (protoheme IX) to heme O by substitution of the vinyl group on carbon 2 of heme B porphyrin ring with a hydroxyethyl farnesyl side group.</text>
</comment>
<comment type="catalytic activity">
    <reaction evidence="1">
        <text>heme b + (2E,6E)-farnesyl diphosphate + H2O = Fe(II)-heme o + diphosphate</text>
        <dbReference type="Rhea" id="RHEA:28070"/>
        <dbReference type="ChEBI" id="CHEBI:15377"/>
        <dbReference type="ChEBI" id="CHEBI:33019"/>
        <dbReference type="ChEBI" id="CHEBI:60344"/>
        <dbReference type="ChEBI" id="CHEBI:60530"/>
        <dbReference type="ChEBI" id="CHEBI:175763"/>
        <dbReference type="EC" id="2.5.1.141"/>
    </reaction>
</comment>
<comment type="pathway">
    <text evidence="1">Porphyrin-containing compound metabolism; heme O biosynthesis; heme O from protoheme: step 1/1.</text>
</comment>
<comment type="subcellular location">
    <subcellularLocation>
        <location evidence="1">Cell inner membrane</location>
        <topology evidence="1">Multi-pass membrane protein</topology>
    </subcellularLocation>
</comment>
<comment type="miscellaneous">
    <text evidence="1">Carbon 2 of the heme B porphyrin ring is defined according to the Fischer nomenclature.</text>
</comment>
<comment type="similarity">
    <text evidence="1">Belongs to the UbiA prenyltransferase family. Protoheme IX farnesyltransferase subfamily.</text>
</comment>
<comment type="sequence caution" evidence="2">
    <conflict type="erroneous initiation">
        <sequence resource="EMBL-CDS" id="BAF88956"/>
    </conflict>
</comment>
<sequence length="307" mass="32696">MNENAGRSLAPQASEGLGTPRDYISLLKPRVMSLVIFTALVGLVRAPDHVHPVIAFTAILCIAVGAGAAGALNMWWDADIDAVMSRTQRRPIPAGRVTPREALAFGLTLAAFSVVVLGLLVNVLAGALLAFTIFFYVVVYTMWLKRSTPQNIVIGGLSGALPPMVAWAAASGSISLESVILVAIIFFWTPPHFWALSLYRADDYARAGVPMLPVTAGPDETRKQILLYTLFLVPLALSPVMLGEAGLAYGVVAGVTGLGMLLLAVNVYRRRTGPAAVTAAKKLFGFSILYLFLLFATLLAEALVRGM</sequence>
<name>COXX_AZOC5</name>
<dbReference type="EC" id="2.5.1.141" evidence="1"/>
<dbReference type="EMBL" id="AP009384">
    <property type="protein sequence ID" value="BAF88956.1"/>
    <property type="status" value="ALT_INIT"/>
    <property type="molecule type" value="Genomic_DNA"/>
</dbReference>
<dbReference type="SMR" id="A8IDL3"/>
<dbReference type="STRING" id="438753.AZC_2958"/>
<dbReference type="KEGG" id="azc:AZC_2958"/>
<dbReference type="eggNOG" id="COG0109">
    <property type="taxonomic scope" value="Bacteria"/>
</dbReference>
<dbReference type="HOGENOM" id="CLU_029631_0_2_5"/>
<dbReference type="UniPathway" id="UPA00834">
    <property type="reaction ID" value="UER00712"/>
</dbReference>
<dbReference type="Proteomes" id="UP000000270">
    <property type="component" value="Chromosome"/>
</dbReference>
<dbReference type="GO" id="GO:0005886">
    <property type="term" value="C:plasma membrane"/>
    <property type="evidence" value="ECO:0007669"/>
    <property type="project" value="UniProtKB-SubCell"/>
</dbReference>
<dbReference type="GO" id="GO:0008495">
    <property type="term" value="F:protoheme IX farnesyltransferase activity"/>
    <property type="evidence" value="ECO:0007669"/>
    <property type="project" value="UniProtKB-UniRule"/>
</dbReference>
<dbReference type="GO" id="GO:0048034">
    <property type="term" value="P:heme O biosynthetic process"/>
    <property type="evidence" value="ECO:0007669"/>
    <property type="project" value="UniProtKB-UniRule"/>
</dbReference>
<dbReference type="CDD" id="cd13957">
    <property type="entry name" value="PT_UbiA_Cox10"/>
    <property type="match status" value="1"/>
</dbReference>
<dbReference type="Gene3D" id="1.10.357.140">
    <property type="entry name" value="UbiA prenyltransferase"/>
    <property type="match status" value="1"/>
</dbReference>
<dbReference type="HAMAP" id="MF_00154">
    <property type="entry name" value="CyoE_CtaB"/>
    <property type="match status" value="1"/>
</dbReference>
<dbReference type="InterPro" id="IPR006369">
    <property type="entry name" value="Protohaem_IX_farnesylTrfase"/>
</dbReference>
<dbReference type="InterPro" id="IPR000537">
    <property type="entry name" value="UbiA_prenyltransferase"/>
</dbReference>
<dbReference type="InterPro" id="IPR030470">
    <property type="entry name" value="UbiA_prenylTrfase_CS"/>
</dbReference>
<dbReference type="InterPro" id="IPR044878">
    <property type="entry name" value="UbiA_sf"/>
</dbReference>
<dbReference type="NCBIfam" id="TIGR01473">
    <property type="entry name" value="cyoE_ctaB"/>
    <property type="match status" value="1"/>
</dbReference>
<dbReference type="NCBIfam" id="NF003349">
    <property type="entry name" value="PRK04375.1-2"/>
    <property type="match status" value="1"/>
</dbReference>
<dbReference type="PANTHER" id="PTHR43448:SF7">
    <property type="entry name" value="4-HYDROXYBENZOATE SOLANESYLTRANSFERASE"/>
    <property type="match status" value="1"/>
</dbReference>
<dbReference type="PANTHER" id="PTHR43448">
    <property type="entry name" value="PROTOHEME IX FARNESYLTRANSFERASE, MITOCHONDRIAL"/>
    <property type="match status" value="1"/>
</dbReference>
<dbReference type="Pfam" id="PF01040">
    <property type="entry name" value="UbiA"/>
    <property type="match status" value="1"/>
</dbReference>
<dbReference type="PROSITE" id="PS00943">
    <property type="entry name" value="UBIA"/>
    <property type="match status" value="1"/>
</dbReference>
<evidence type="ECO:0000255" key="1">
    <source>
        <dbReference type="HAMAP-Rule" id="MF_00154"/>
    </source>
</evidence>
<evidence type="ECO:0000305" key="2"/>
<protein>
    <recommendedName>
        <fullName evidence="1">Protoheme IX farnesyltransferase</fullName>
        <ecNumber evidence="1">2.5.1.141</ecNumber>
    </recommendedName>
    <alternativeName>
        <fullName evidence="1">Heme B farnesyltransferase</fullName>
    </alternativeName>
    <alternativeName>
        <fullName evidence="1">Heme O synthase</fullName>
    </alternativeName>
</protein>
<gene>
    <name evidence="1" type="primary">ctaB</name>
    <name type="ordered locus">AZC_2958</name>
</gene>
<accession>A8IDL3</accession>
<feature type="chain" id="PRO_0000346023" description="Protoheme IX farnesyltransferase">
    <location>
        <begin position="1"/>
        <end position="307"/>
    </location>
</feature>
<feature type="transmembrane region" description="Helical" evidence="1">
    <location>
        <begin position="24"/>
        <end position="44"/>
    </location>
</feature>
<feature type="transmembrane region" description="Helical" evidence="1">
    <location>
        <begin position="52"/>
        <end position="72"/>
    </location>
</feature>
<feature type="transmembrane region" description="Helical" evidence="1">
    <location>
        <begin position="115"/>
        <end position="135"/>
    </location>
</feature>
<feature type="transmembrane region" description="Helical" evidence="1">
    <location>
        <begin position="152"/>
        <end position="172"/>
    </location>
</feature>
<feature type="transmembrane region" description="Helical" evidence="1">
    <location>
        <begin position="179"/>
        <end position="199"/>
    </location>
</feature>
<feature type="transmembrane region" description="Helical" evidence="1">
    <location>
        <begin position="224"/>
        <end position="244"/>
    </location>
</feature>
<feature type="transmembrane region" description="Helical" evidence="1">
    <location>
        <begin position="245"/>
        <end position="265"/>
    </location>
</feature>
<feature type="transmembrane region" description="Helical" evidence="1">
    <location>
        <begin position="284"/>
        <end position="304"/>
    </location>
</feature>